<feature type="chain" id="PRO_0000179108" description="Uncharacterized protein NMA0420">
    <location>
        <begin position="1"/>
        <end position="227"/>
    </location>
</feature>
<feature type="transmembrane region" description="Helical" evidence="1">
    <location>
        <begin position="25"/>
        <end position="45"/>
    </location>
</feature>
<feature type="transmembrane region" description="Helical" evidence="1">
    <location>
        <begin position="49"/>
        <end position="69"/>
    </location>
</feature>
<feature type="transmembrane region" description="Helical" evidence="1">
    <location>
        <begin position="80"/>
        <end position="100"/>
    </location>
</feature>
<feature type="transmembrane region" description="Helical" evidence="1">
    <location>
        <begin position="111"/>
        <end position="131"/>
    </location>
</feature>
<feature type="transmembrane region" description="Helical" evidence="1">
    <location>
        <begin position="144"/>
        <end position="164"/>
    </location>
</feature>
<feature type="transmembrane region" description="Helical" evidence="1">
    <location>
        <begin position="165"/>
        <end position="185"/>
    </location>
</feature>
<feature type="transmembrane region" description="Helical" evidence="1">
    <location>
        <begin position="201"/>
        <end position="221"/>
    </location>
</feature>
<keyword id="KW-1003">Cell membrane</keyword>
<keyword id="KW-0472">Membrane</keyword>
<keyword id="KW-0812">Transmembrane</keyword>
<keyword id="KW-1133">Transmembrane helix</keyword>
<name>Y420_NEIMA</name>
<accession>P63701</accession>
<accession>A1IPN7</accession>
<accession>Q9JRI0</accession>
<evidence type="ECO:0000255" key="1"/>
<evidence type="ECO:0000305" key="2"/>
<protein>
    <recommendedName>
        <fullName>Uncharacterized protein NMA0420</fullName>
    </recommendedName>
</protein>
<gene>
    <name type="ordered locus">NMA0420</name>
</gene>
<comment type="subcellular location">
    <subcellularLocation>
        <location evidence="2">Cell membrane</location>
        <topology evidence="2">Multi-pass membrane protein</topology>
    </subcellularLocation>
</comment>
<proteinExistence type="predicted"/>
<reference key="1">
    <citation type="journal article" date="2000" name="Nature">
        <title>Complete DNA sequence of a serogroup A strain of Neisseria meningitidis Z2491.</title>
        <authorList>
            <person name="Parkhill J."/>
            <person name="Achtman M."/>
            <person name="James K.D."/>
            <person name="Bentley S.D."/>
            <person name="Churcher C.M."/>
            <person name="Klee S.R."/>
            <person name="Morelli G."/>
            <person name="Basham D."/>
            <person name="Brown D."/>
            <person name="Chillingworth T."/>
            <person name="Davies R.M."/>
            <person name="Davis P."/>
            <person name="Devlin K."/>
            <person name="Feltwell T."/>
            <person name="Hamlin N."/>
            <person name="Holroyd S."/>
            <person name="Jagels K."/>
            <person name="Leather S."/>
            <person name="Moule S."/>
            <person name="Mungall K.L."/>
            <person name="Quail M.A."/>
            <person name="Rajandream M.A."/>
            <person name="Rutherford K.M."/>
            <person name="Simmonds M."/>
            <person name="Skelton J."/>
            <person name="Whitehead S."/>
            <person name="Spratt B.G."/>
            <person name="Barrell B.G."/>
        </authorList>
    </citation>
    <scope>NUCLEOTIDE SEQUENCE [LARGE SCALE GENOMIC DNA]</scope>
    <source>
        <strain>DSM 15465 / Z2491</strain>
    </source>
</reference>
<organism>
    <name type="scientific">Neisseria meningitidis serogroup A / serotype 4A (strain DSM 15465 / Z2491)</name>
    <dbReference type="NCBI Taxonomy" id="122587"/>
    <lineage>
        <taxon>Bacteria</taxon>
        <taxon>Pseudomonadati</taxon>
        <taxon>Pseudomonadota</taxon>
        <taxon>Betaproteobacteria</taxon>
        <taxon>Neisseriales</taxon>
        <taxon>Neisseriaceae</taxon>
        <taxon>Neisseria</taxon>
    </lineage>
</organism>
<dbReference type="EMBL" id="AL157959">
    <property type="protein sequence ID" value="CAM07708.1"/>
    <property type="molecule type" value="Genomic_DNA"/>
</dbReference>
<dbReference type="RefSeq" id="WP_002225674.1">
    <property type="nucleotide sequence ID" value="NC_003116.1"/>
</dbReference>
<dbReference type="SMR" id="P63701"/>
<dbReference type="EnsemblBacteria" id="CAM07708">
    <property type="protein sequence ID" value="CAM07708"/>
    <property type="gene ID" value="NMA0420"/>
</dbReference>
<dbReference type="KEGG" id="nma:NMA0420"/>
<dbReference type="HOGENOM" id="CLU_058671_2_1_4"/>
<dbReference type="Proteomes" id="UP000000626">
    <property type="component" value="Chromosome"/>
</dbReference>
<dbReference type="GO" id="GO:0005886">
    <property type="term" value="C:plasma membrane"/>
    <property type="evidence" value="ECO:0007669"/>
    <property type="project" value="UniProtKB-SubCell"/>
</dbReference>
<dbReference type="InterPro" id="IPR006214">
    <property type="entry name" value="Bax_inhibitor_1-related"/>
</dbReference>
<dbReference type="PANTHER" id="PTHR23291">
    <property type="entry name" value="BAX INHIBITOR-RELATED"/>
    <property type="match status" value="1"/>
</dbReference>
<dbReference type="PANTHER" id="PTHR23291:SF115">
    <property type="entry name" value="MODULATOR OF FTSH PROTEASE YCCA"/>
    <property type="match status" value="1"/>
</dbReference>
<dbReference type="Pfam" id="PF01027">
    <property type="entry name" value="Bax1-I"/>
    <property type="match status" value="1"/>
</dbReference>
<sequence>MQHDVYDYTAHTVSKNTVLQKTYRLLGFSFIPASAGAALAANAGFNFYAAFGSRWIGFAVVLAFFYGMIHFIEKNRYSNTGVTLLMVFTFGMGVLIGPVLQYALHIADGAKIVGIAAAMTAAVFLTMSALARRTRLDMNALGRFLTVGAVILMVAVVANLFLGIPALALTISAGFVLFSSLMIMWQVRTVIDGGEDSHISAALTLFISLYNIFSSLLNILLSLNGED</sequence>